<dbReference type="EMBL" id="U14993">
    <property type="protein sequence ID" value="AAA80193.1"/>
    <property type="molecule type" value="Genomic_DNA"/>
</dbReference>
<dbReference type="RefSeq" id="WP_003693766.1">
    <property type="nucleotide sequence ID" value="NZ_UGRK01000002.1"/>
</dbReference>
<dbReference type="SMR" id="P43505"/>
<dbReference type="TCDB" id="2.A.6.2.5">
    <property type="family name" value="the resistance-nodulation-cell division (rnd) superfamily"/>
</dbReference>
<dbReference type="GO" id="GO:0005886">
    <property type="term" value="C:plasma membrane"/>
    <property type="evidence" value="ECO:0007669"/>
    <property type="project" value="UniProtKB-SubCell"/>
</dbReference>
<dbReference type="GO" id="GO:0022857">
    <property type="term" value="F:transmembrane transporter activity"/>
    <property type="evidence" value="ECO:0007669"/>
    <property type="project" value="InterPro"/>
</dbReference>
<dbReference type="GO" id="GO:0046677">
    <property type="term" value="P:response to antibiotic"/>
    <property type="evidence" value="ECO:0007669"/>
    <property type="project" value="TreeGrafter"/>
</dbReference>
<dbReference type="FunFam" id="2.40.420.20:FF:000001">
    <property type="entry name" value="Efflux RND transporter periplasmic adaptor subunit"/>
    <property type="match status" value="1"/>
</dbReference>
<dbReference type="Gene3D" id="2.40.30.170">
    <property type="match status" value="1"/>
</dbReference>
<dbReference type="Gene3D" id="2.40.420.20">
    <property type="match status" value="1"/>
</dbReference>
<dbReference type="Gene3D" id="2.40.50.100">
    <property type="match status" value="1"/>
</dbReference>
<dbReference type="Gene3D" id="1.10.287.470">
    <property type="entry name" value="Helix hairpin bin"/>
    <property type="match status" value="1"/>
</dbReference>
<dbReference type="InterPro" id="IPR043602">
    <property type="entry name" value="CusB-like_dom_1"/>
</dbReference>
<dbReference type="InterPro" id="IPR032317">
    <property type="entry name" value="CusB_D23"/>
</dbReference>
<dbReference type="InterPro" id="IPR051160">
    <property type="entry name" value="MFP_Efflux"/>
</dbReference>
<dbReference type="InterPro" id="IPR006143">
    <property type="entry name" value="RND_pump_MFP"/>
</dbReference>
<dbReference type="NCBIfam" id="TIGR01730">
    <property type="entry name" value="RND_mfp"/>
    <property type="match status" value="1"/>
</dbReference>
<dbReference type="PANTHER" id="PTHR30158">
    <property type="entry name" value="ACRA/E-RELATED COMPONENT OF DRUG EFFLUX TRANSPORTER"/>
    <property type="match status" value="1"/>
</dbReference>
<dbReference type="PANTHER" id="PTHR30158:SF3">
    <property type="entry name" value="MULTIDRUG EFFLUX PUMP SUBUNIT ACRA-RELATED"/>
    <property type="match status" value="1"/>
</dbReference>
<dbReference type="Pfam" id="PF00529">
    <property type="entry name" value="CusB_dom_1"/>
    <property type="match status" value="1"/>
</dbReference>
<dbReference type="Pfam" id="PF16576">
    <property type="entry name" value="HlyD_D23"/>
    <property type="match status" value="1"/>
</dbReference>
<dbReference type="SUPFAM" id="SSF111369">
    <property type="entry name" value="HlyD-like secretion proteins"/>
    <property type="match status" value="1"/>
</dbReference>
<dbReference type="PROSITE" id="PS51257">
    <property type="entry name" value="PROKAR_LIPOPROTEIN"/>
    <property type="match status" value="1"/>
</dbReference>
<organism>
    <name type="scientific">Neisseria gonorrhoeae</name>
    <dbReference type="NCBI Taxonomy" id="485"/>
    <lineage>
        <taxon>Bacteria</taxon>
        <taxon>Pseudomonadati</taxon>
        <taxon>Pseudomonadota</taxon>
        <taxon>Betaproteobacteria</taxon>
        <taxon>Neisseriales</taxon>
        <taxon>Neisseriaceae</taxon>
        <taxon>Neisseria</taxon>
    </lineage>
</organism>
<accession>P43505</accession>
<evidence type="ECO:0000255" key="1">
    <source>
        <dbReference type="PROSITE-ProRule" id="PRU00303"/>
    </source>
</evidence>
<evidence type="ECO:0000256" key="2">
    <source>
        <dbReference type="SAM" id="MobiDB-lite"/>
    </source>
</evidence>
<evidence type="ECO:0000305" key="3"/>
<sequence length="412" mass="42774">MAFYASKAMRAAALAAAVALALSSCGKGGDAAQGGQPAGREAPAPVVGVVTVHPQTVALTVELPGRLESLRTADVRAQVGGIIQKRLFQEGSYVRAGQPLYQIDSSTYEAGLESARAQLATAQATLAKADADLARYKPLVSADAISKQEYDAAVTAKRSAEASVKAAQAAIKSAGINLNRSRITAPISGFIGQSKVSEGTLLNAGDTTVLATIRQTNPMYVNVTQSASEVMKLRRQIAEGKLLAADGAIAVGIKFDDGTVYPEKGRLLFADPTVDESTGQITLRAAVSNDQNILMPGLYVRVLMDQVAADNAFIVPQQAVTRGAKDTVMIVNAQGGMEPREVTVAQQQGTNWIVTSGLKDGDKVVVEGISIAGMTGAKKVTPKEWAPSENQAAAPQAGVQTASEAKPASEAK</sequence>
<comment type="function">
    <text>Cell membrane lipoprotein, involved in cell membrane permeability to hydrophobic compounds such as antibiotics, dyes and detergents.</text>
</comment>
<comment type="subcellular location">
    <subcellularLocation>
        <location evidence="3">Cell inner membrane</location>
        <topology evidence="1">Lipid-anchor</topology>
    </subcellularLocation>
</comment>
<comment type="similarity">
    <text evidence="3">Belongs to the membrane fusion protein (MFP) (TC 8.A.1) family.</text>
</comment>
<protein>
    <recommendedName>
        <fullName>Membrane fusion protein MtrC</fullName>
    </recommendedName>
</protein>
<name>MTRC_NEIGO</name>
<gene>
    <name type="primary">mtrC</name>
</gene>
<feature type="signal peptide" evidence="1">
    <location>
        <begin position="1"/>
        <end position="24"/>
    </location>
</feature>
<feature type="chain" id="PRO_0000018713" description="Membrane fusion protein MtrC">
    <location>
        <begin position="25"/>
        <end position="412"/>
    </location>
</feature>
<feature type="region of interest" description="Disordered" evidence="2">
    <location>
        <begin position="377"/>
        <end position="412"/>
    </location>
</feature>
<feature type="compositionally biased region" description="Polar residues" evidence="2">
    <location>
        <begin position="388"/>
        <end position="403"/>
    </location>
</feature>
<feature type="lipid moiety-binding region" description="N-palmitoyl cysteine" evidence="1">
    <location>
        <position position="25"/>
    </location>
</feature>
<feature type="lipid moiety-binding region" description="S-diacylglycerol cysteine" evidence="1">
    <location>
        <position position="25"/>
    </location>
</feature>
<keyword id="KW-0997">Cell inner membrane</keyword>
<keyword id="KW-1003">Cell membrane</keyword>
<keyword id="KW-0449">Lipoprotein</keyword>
<keyword id="KW-0472">Membrane</keyword>
<keyword id="KW-0564">Palmitate</keyword>
<keyword id="KW-0732">Signal</keyword>
<proteinExistence type="inferred from homology"/>
<reference key="1">
    <citation type="journal article" date="1994" name="Mol. Microbiol.">
        <title>Regulation of the permeability of the gonococcal cell envelope by the mtr system.</title>
        <authorList>
            <person name="Pan W."/>
            <person name="Spratt B.G."/>
        </authorList>
    </citation>
    <scope>NUCLEOTIDE SEQUENCE [GENOMIC DNA]</scope>
    <source>
        <strain>FA19</strain>
    </source>
</reference>